<evidence type="ECO:0000255" key="1">
    <source>
        <dbReference type="HAMAP-Rule" id="MF_00465"/>
    </source>
</evidence>
<feature type="chain" id="PRO_1000135449" description="S-adenosylmethionine decarboxylase beta chain" evidence="1">
    <location>
        <begin position="1"/>
        <end position="111"/>
    </location>
</feature>
<feature type="chain" id="PRO_1000135450" description="S-adenosylmethionine decarboxylase alpha chain" evidence="1">
    <location>
        <begin position="112"/>
        <end position="264"/>
    </location>
</feature>
<feature type="active site" description="Schiff-base intermediate with substrate; via pyruvic acid" evidence="1">
    <location>
        <position position="112"/>
    </location>
</feature>
<feature type="active site" description="Proton acceptor; for processing activity" evidence="1">
    <location>
        <position position="117"/>
    </location>
</feature>
<feature type="active site" description="Proton donor; for catalytic activity" evidence="1">
    <location>
        <position position="140"/>
    </location>
</feature>
<feature type="site" description="Cleavage (non-hydrolytic); by autolysis" evidence="1">
    <location>
        <begin position="111"/>
        <end position="112"/>
    </location>
</feature>
<feature type="modified residue" description="Pyruvic acid (Ser); by autocatalysis" evidence="1">
    <location>
        <position position="112"/>
    </location>
</feature>
<organism>
    <name type="scientific">Salmonella paratyphi C (strain RKS4594)</name>
    <dbReference type="NCBI Taxonomy" id="476213"/>
    <lineage>
        <taxon>Bacteria</taxon>
        <taxon>Pseudomonadati</taxon>
        <taxon>Pseudomonadota</taxon>
        <taxon>Gammaproteobacteria</taxon>
        <taxon>Enterobacterales</taxon>
        <taxon>Enterobacteriaceae</taxon>
        <taxon>Salmonella</taxon>
    </lineage>
</organism>
<gene>
    <name evidence="1" type="primary">speD</name>
    <name type="ordered locus">SPC_0178</name>
</gene>
<name>SPED_SALPC</name>
<accession>C0Q5M6</accession>
<keyword id="KW-0068">Autocatalytic cleavage</keyword>
<keyword id="KW-0210">Decarboxylase</keyword>
<keyword id="KW-0456">Lyase</keyword>
<keyword id="KW-0620">Polyamine biosynthesis</keyword>
<keyword id="KW-0670">Pyruvate</keyword>
<keyword id="KW-0949">S-adenosyl-L-methionine</keyword>
<keyword id="KW-0704">Schiff base</keyword>
<keyword id="KW-0745">Spermidine biosynthesis</keyword>
<keyword id="KW-0865">Zymogen</keyword>
<sequence>MKKLKLHGFNNLTKSLSFCIYDICYAKTAEERDGYIAYIDELYNANRLTEILSETCSIIGANILNIARQDYEPQGASVTILVSEEPVDPKLIDQTEHPGPLPETVVAHLDKSHICVHTYPESHPEGGLCTFRADIEVSTCGVISPLKALNYLIHQLESDIVTIDYRVRGFTRDVNGMKHFIDHEINSIQNFMSEDMKSLYDMVDVNVYQENIFHTKMLLKEFDLKHYMFHTKPEDLTETERQEITAALWKEMREIYYGRNISAV</sequence>
<proteinExistence type="inferred from homology"/>
<dbReference type="EC" id="4.1.1.50" evidence="1"/>
<dbReference type="EMBL" id="CP000857">
    <property type="protein sequence ID" value="ACN44368.1"/>
    <property type="molecule type" value="Genomic_DNA"/>
</dbReference>
<dbReference type="RefSeq" id="WP_000734293.1">
    <property type="nucleotide sequence ID" value="NC_012125.1"/>
</dbReference>
<dbReference type="KEGG" id="sei:SPC_0178"/>
<dbReference type="HOGENOM" id="CLU_092007_0_0_6"/>
<dbReference type="UniPathway" id="UPA00331">
    <property type="reaction ID" value="UER00451"/>
</dbReference>
<dbReference type="Proteomes" id="UP000001599">
    <property type="component" value="Chromosome"/>
</dbReference>
<dbReference type="GO" id="GO:0005829">
    <property type="term" value="C:cytosol"/>
    <property type="evidence" value="ECO:0007669"/>
    <property type="project" value="TreeGrafter"/>
</dbReference>
<dbReference type="GO" id="GO:0004014">
    <property type="term" value="F:adenosylmethionine decarboxylase activity"/>
    <property type="evidence" value="ECO:0007669"/>
    <property type="project" value="UniProtKB-UniRule"/>
</dbReference>
<dbReference type="GO" id="GO:0008295">
    <property type="term" value="P:spermidine biosynthetic process"/>
    <property type="evidence" value="ECO:0007669"/>
    <property type="project" value="UniProtKB-UniRule"/>
</dbReference>
<dbReference type="FunFam" id="3.60.90.10:FF:000001">
    <property type="entry name" value="S-adenosylmethionine decarboxylase proenzyme"/>
    <property type="match status" value="1"/>
</dbReference>
<dbReference type="Gene3D" id="3.60.90.10">
    <property type="entry name" value="S-adenosylmethionine decarboxylase"/>
    <property type="match status" value="1"/>
</dbReference>
<dbReference type="HAMAP" id="MF_00465">
    <property type="entry name" value="AdoMetDC_2"/>
    <property type="match status" value="1"/>
</dbReference>
<dbReference type="InterPro" id="IPR003826">
    <property type="entry name" value="AdoMetDC_fam_prok"/>
</dbReference>
<dbReference type="InterPro" id="IPR009165">
    <property type="entry name" value="S-AdoMet_deCO2ase_bac"/>
</dbReference>
<dbReference type="InterPro" id="IPR016067">
    <property type="entry name" value="S-AdoMet_deCO2ase_core"/>
</dbReference>
<dbReference type="NCBIfam" id="TIGR03331">
    <property type="entry name" value="SAM_DCase_Eco"/>
    <property type="match status" value="1"/>
</dbReference>
<dbReference type="PANTHER" id="PTHR33866">
    <property type="entry name" value="S-ADENOSYLMETHIONINE DECARBOXYLASE PROENZYME"/>
    <property type="match status" value="1"/>
</dbReference>
<dbReference type="PANTHER" id="PTHR33866:SF1">
    <property type="entry name" value="S-ADENOSYLMETHIONINE DECARBOXYLASE PROENZYME"/>
    <property type="match status" value="1"/>
</dbReference>
<dbReference type="Pfam" id="PF02675">
    <property type="entry name" value="AdoMet_dc"/>
    <property type="match status" value="1"/>
</dbReference>
<dbReference type="PIRSF" id="PIRSF001356">
    <property type="entry name" value="SAM_decarboxylas"/>
    <property type="match status" value="1"/>
</dbReference>
<dbReference type="SUPFAM" id="SSF56276">
    <property type="entry name" value="S-adenosylmethionine decarboxylase"/>
    <property type="match status" value="1"/>
</dbReference>
<reference key="1">
    <citation type="journal article" date="2009" name="PLoS ONE">
        <title>Salmonella paratyphi C: genetic divergence from Salmonella choleraesuis and pathogenic convergence with Salmonella typhi.</title>
        <authorList>
            <person name="Liu W.-Q."/>
            <person name="Feng Y."/>
            <person name="Wang Y."/>
            <person name="Zou Q.-H."/>
            <person name="Chen F."/>
            <person name="Guo J.-T."/>
            <person name="Peng Y.-H."/>
            <person name="Jin Y."/>
            <person name="Li Y.-G."/>
            <person name="Hu S.-N."/>
            <person name="Johnston R.N."/>
            <person name="Liu G.-R."/>
            <person name="Liu S.-L."/>
        </authorList>
    </citation>
    <scope>NUCLEOTIDE SEQUENCE [LARGE SCALE GENOMIC DNA]</scope>
    <source>
        <strain>RKS4594</strain>
    </source>
</reference>
<comment type="function">
    <text evidence="1">Catalyzes the decarboxylation of S-adenosylmethionine to S-adenosylmethioninamine (dcAdoMet), the propylamine donor required for the synthesis of the polyamines spermine and spermidine from the diamine putrescine.</text>
</comment>
<comment type="catalytic activity">
    <reaction evidence="1">
        <text>S-adenosyl-L-methionine + H(+) = S-adenosyl 3-(methylsulfanyl)propylamine + CO2</text>
        <dbReference type="Rhea" id="RHEA:15981"/>
        <dbReference type="ChEBI" id="CHEBI:15378"/>
        <dbReference type="ChEBI" id="CHEBI:16526"/>
        <dbReference type="ChEBI" id="CHEBI:57443"/>
        <dbReference type="ChEBI" id="CHEBI:59789"/>
        <dbReference type="EC" id="4.1.1.50"/>
    </reaction>
</comment>
<comment type="cofactor">
    <cofactor evidence="1">
        <name>pyruvate</name>
        <dbReference type="ChEBI" id="CHEBI:15361"/>
    </cofactor>
    <text evidence="1">Binds 1 pyruvoyl group covalently per subunit.</text>
</comment>
<comment type="pathway">
    <text evidence="1">Amine and polyamine biosynthesis; S-adenosylmethioninamine biosynthesis; S-adenosylmethioninamine from S-adenosyl-L-methionine: step 1/1.</text>
</comment>
<comment type="subunit">
    <text evidence="1">Heterooctamer of four alpha and four beta chains arranged as a tetramer of alpha/beta heterodimers.</text>
</comment>
<comment type="PTM">
    <text evidence="1">Is synthesized initially as an inactive proenzyme. Formation of the active enzyme involves a self-maturation process in which the active site pyruvoyl group is generated from an internal serine residue via an autocatalytic post-translational modification. Two non-identical subunits are generated from the proenzyme in this reaction, and the pyruvate is formed at the N-terminus of the alpha chain, which is derived from the carboxyl end of the proenzyme. The post-translation cleavage follows an unusual pathway, termed non-hydrolytic serinolysis, in which the side chain hydroxyl group of the serine supplies its oxygen atom to form the C-terminus of the beta chain, while the remainder of the serine residue undergoes an oxidative deamination to produce ammonia and the pyruvoyl group blocking the N-terminus of the alpha chain.</text>
</comment>
<comment type="similarity">
    <text evidence="1">Belongs to the prokaryotic AdoMetDC family. Type 2 subfamily.</text>
</comment>
<protein>
    <recommendedName>
        <fullName evidence="1">S-adenosylmethionine decarboxylase proenzyme</fullName>
        <shortName evidence="1">AdoMetDC</shortName>
        <shortName evidence="1">SAMDC</shortName>
        <ecNumber evidence="1">4.1.1.50</ecNumber>
    </recommendedName>
    <component>
        <recommendedName>
            <fullName evidence="1">S-adenosylmethionine decarboxylase beta chain</fullName>
        </recommendedName>
    </component>
    <component>
        <recommendedName>
            <fullName evidence="1">S-adenosylmethionine decarboxylase alpha chain</fullName>
        </recommendedName>
    </component>
</protein>